<feature type="chain" id="PRO_1000146840" description="Nicotinate phosphoribosyltransferase">
    <location>
        <begin position="1"/>
        <end position="400"/>
    </location>
</feature>
<feature type="modified residue" description="Phosphohistidine; by autocatalysis" evidence="1">
    <location>
        <position position="220"/>
    </location>
</feature>
<name>PNCB_ECO27</name>
<evidence type="ECO:0000255" key="1">
    <source>
        <dbReference type="HAMAP-Rule" id="MF_00570"/>
    </source>
</evidence>
<keyword id="KW-0436">Ligase</keyword>
<keyword id="KW-0597">Phosphoprotein</keyword>
<keyword id="KW-0662">Pyridine nucleotide biosynthesis</keyword>
<keyword id="KW-1185">Reference proteome</keyword>
<protein>
    <recommendedName>
        <fullName evidence="1">Nicotinate phosphoribosyltransferase</fullName>
        <shortName evidence="1">NAPRTase</shortName>
        <ecNumber evidence="1">6.3.4.21</ecNumber>
    </recommendedName>
</protein>
<dbReference type="EC" id="6.3.4.21" evidence="1"/>
<dbReference type="EMBL" id="FM180568">
    <property type="protein sequence ID" value="CAS08472.1"/>
    <property type="molecule type" value="Genomic_DNA"/>
</dbReference>
<dbReference type="RefSeq" id="WP_001304764.1">
    <property type="nucleotide sequence ID" value="NC_011601.1"/>
</dbReference>
<dbReference type="SMR" id="B7UN17"/>
<dbReference type="KEGG" id="ecg:E2348C_0924"/>
<dbReference type="HOGENOM" id="CLU_030991_1_0_6"/>
<dbReference type="UniPathway" id="UPA00253">
    <property type="reaction ID" value="UER00457"/>
</dbReference>
<dbReference type="Proteomes" id="UP000008205">
    <property type="component" value="Chromosome"/>
</dbReference>
<dbReference type="GO" id="GO:0005829">
    <property type="term" value="C:cytosol"/>
    <property type="evidence" value="ECO:0007669"/>
    <property type="project" value="TreeGrafter"/>
</dbReference>
<dbReference type="GO" id="GO:0004516">
    <property type="term" value="F:nicotinate phosphoribosyltransferase activity"/>
    <property type="evidence" value="ECO:0007669"/>
    <property type="project" value="UniProtKB-UniRule"/>
</dbReference>
<dbReference type="GO" id="GO:0034355">
    <property type="term" value="P:NAD biosynthetic process via the salvage pathway"/>
    <property type="evidence" value="ECO:0007669"/>
    <property type="project" value="TreeGrafter"/>
</dbReference>
<dbReference type="CDD" id="cd01401">
    <property type="entry name" value="PncB_like"/>
    <property type="match status" value="1"/>
</dbReference>
<dbReference type="FunFam" id="3.20.140.10:FF:000001">
    <property type="entry name" value="Nicotinate phosphoribosyltransferase"/>
    <property type="match status" value="1"/>
</dbReference>
<dbReference type="Gene3D" id="3.20.140.10">
    <property type="entry name" value="nicotinate phosphoribosyltransferase"/>
    <property type="match status" value="1"/>
</dbReference>
<dbReference type="HAMAP" id="MF_00570">
    <property type="entry name" value="NAPRTase"/>
    <property type="match status" value="1"/>
</dbReference>
<dbReference type="InterPro" id="IPR041525">
    <property type="entry name" value="N/Namide_PRibTrfase"/>
</dbReference>
<dbReference type="InterPro" id="IPR040727">
    <property type="entry name" value="NAPRTase_N"/>
</dbReference>
<dbReference type="InterPro" id="IPR006406">
    <property type="entry name" value="Nic_PRibTrfase"/>
</dbReference>
<dbReference type="InterPro" id="IPR007229">
    <property type="entry name" value="Nic_PRibTrfase-Fam"/>
</dbReference>
<dbReference type="InterPro" id="IPR036068">
    <property type="entry name" value="Nicotinate_pribotase-like_C"/>
</dbReference>
<dbReference type="NCBIfam" id="TIGR01514">
    <property type="entry name" value="NAPRTase"/>
    <property type="match status" value="1"/>
</dbReference>
<dbReference type="NCBIfam" id="NF003704">
    <property type="entry name" value="PRK05321.1"/>
    <property type="match status" value="1"/>
</dbReference>
<dbReference type="PANTHER" id="PTHR11098">
    <property type="entry name" value="NICOTINATE PHOSPHORIBOSYLTRANSFERASE"/>
    <property type="match status" value="1"/>
</dbReference>
<dbReference type="PANTHER" id="PTHR11098:SF1">
    <property type="entry name" value="NICOTINATE PHOSPHORIBOSYLTRANSFERASE"/>
    <property type="match status" value="1"/>
</dbReference>
<dbReference type="Pfam" id="PF04095">
    <property type="entry name" value="NAPRTase"/>
    <property type="match status" value="1"/>
</dbReference>
<dbReference type="Pfam" id="PF17767">
    <property type="entry name" value="NAPRTase_N"/>
    <property type="match status" value="1"/>
</dbReference>
<dbReference type="PIRSF" id="PIRSF000484">
    <property type="entry name" value="NAPRT"/>
    <property type="match status" value="1"/>
</dbReference>
<dbReference type="SUPFAM" id="SSF51690">
    <property type="entry name" value="Nicotinate/Quinolinate PRTase C-terminal domain-like"/>
    <property type="match status" value="1"/>
</dbReference>
<dbReference type="SUPFAM" id="SSF54675">
    <property type="entry name" value="Nicotinate/Quinolinate PRTase N-terminal domain-like"/>
    <property type="match status" value="1"/>
</dbReference>
<accession>B7UN17</accession>
<organism>
    <name type="scientific">Escherichia coli O127:H6 (strain E2348/69 / EPEC)</name>
    <dbReference type="NCBI Taxonomy" id="574521"/>
    <lineage>
        <taxon>Bacteria</taxon>
        <taxon>Pseudomonadati</taxon>
        <taxon>Pseudomonadota</taxon>
        <taxon>Gammaproteobacteria</taxon>
        <taxon>Enterobacterales</taxon>
        <taxon>Enterobacteriaceae</taxon>
        <taxon>Escherichia</taxon>
    </lineage>
</organism>
<comment type="function">
    <text evidence="1">Catalyzes the synthesis of beta-nicotinate D-ribonucleotide from nicotinate and 5-phospho-D-ribose 1-phosphate at the expense of ATP.</text>
</comment>
<comment type="catalytic activity">
    <reaction evidence="1">
        <text>nicotinate + 5-phospho-alpha-D-ribose 1-diphosphate + ATP + H2O = nicotinate beta-D-ribonucleotide + ADP + phosphate + diphosphate</text>
        <dbReference type="Rhea" id="RHEA:36163"/>
        <dbReference type="ChEBI" id="CHEBI:15377"/>
        <dbReference type="ChEBI" id="CHEBI:30616"/>
        <dbReference type="ChEBI" id="CHEBI:32544"/>
        <dbReference type="ChEBI" id="CHEBI:33019"/>
        <dbReference type="ChEBI" id="CHEBI:43474"/>
        <dbReference type="ChEBI" id="CHEBI:57502"/>
        <dbReference type="ChEBI" id="CHEBI:58017"/>
        <dbReference type="ChEBI" id="CHEBI:456216"/>
        <dbReference type="EC" id="6.3.4.21"/>
    </reaction>
</comment>
<comment type="pathway">
    <text evidence="1">Cofactor biosynthesis; NAD(+) biosynthesis; nicotinate D-ribonucleotide from nicotinate: step 1/1.</text>
</comment>
<comment type="PTM">
    <text evidence="1">Transiently phosphorylated on a His residue during the reaction cycle. Phosphorylation strongly increases the affinity for substrates and increases the rate of nicotinate D-ribonucleotide production. Dephosphorylation regenerates the low-affinity form of the enzyme, leading to product release.</text>
</comment>
<comment type="similarity">
    <text evidence="1">Belongs to the NAPRTase family.</text>
</comment>
<sequence length="400" mass="45933">MTQFASPVLHSLLDTDAYKLHMQQAVFHHYYDVHVAAEFRCRGDDLLGIYADAIREQVQAMQHLRLQDDEYQWLSALPFFKADYLNWLREFRFNPEQVTVSNDNGKLDIRLSGPWREVILWEVPLLAVISEMVHRYRSPQADVAQALDTLENKLVDFSALTAGLDMSRFHLMDFGTRRRFSREVQETIVKRLHQESWFVGTSNYDLARRLSLTPMGTQAHEWFQAHQQISPDLANSQRAALAAWLEEYPDQLGIALTDCITMDAFLRDFGVEFASRYQGLRHDSGDPVEWGEKAIAHYEKLGIDPQSKTLVFSDNLDLRKAVELYRHFSSRVQLSFGIGTRLTCDIPQVKPLNIVIKLVECNGKPVAKLSDSPGKTICHDKAFVRALRKAFDLPHIKKAS</sequence>
<proteinExistence type="inferred from homology"/>
<gene>
    <name evidence="1" type="primary">pncB</name>
    <name type="ordered locus">E2348C_0924</name>
</gene>
<reference key="1">
    <citation type="journal article" date="2009" name="J. Bacteriol.">
        <title>Complete genome sequence and comparative genome analysis of enteropathogenic Escherichia coli O127:H6 strain E2348/69.</title>
        <authorList>
            <person name="Iguchi A."/>
            <person name="Thomson N.R."/>
            <person name="Ogura Y."/>
            <person name="Saunders D."/>
            <person name="Ooka T."/>
            <person name="Henderson I.R."/>
            <person name="Harris D."/>
            <person name="Asadulghani M."/>
            <person name="Kurokawa K."/>
            <person name="Dean P."/>
            <person name="Kenny B."/>
            <person name="Quail M.A."/>
            <person name="Thurston S."/>
            <person name="Dougan G."/>
            <person name="Hayashi T."/>
            <person name="Parkhill J."/>
            <person name="Frankel G."/>
        </authorList>
    </citation>
    <scope>NUCLEOTIDE SEQUENCE [LARGE SCALE GENOMIC DNA]</scope>
    <source>
        <strain>E2348/69 / EPEC</strain>
    </source>
</reference>